<gene>
    <name evidence="1" type="primary">argS</name>
    <name type="ordered locus">VIBHAR_01368</name>
</gene>
<protein>
    <recommendedName>
        <fullName evidence="1">Arginine--tRNA ligase</fullName>
        <ecNumber evidence="1">6.1.1.19</ecNumber>
    </recommendedName>
    <alternativeName>
        <fullName evidence="1">Arginyl-tRNA synthetase</fullName>
        <shortName evidence="1">ArgRS</shortName>
    </alternativeName>
</protein>
<evidence type="ECO:0000255" key="1">
    <source>
        <dbReference type="HAMAP-Rule" id="MF_00123"/>
    </source>
</evidence>
<comment type="catalytic activity">
    <reaction evidence="1">
        <text>tRNA(Arg) + L-arginine + ATP = L-arginyl-tRNA(Arg) + AMP + diphosphate</text>
        <dbReference type="Rhea" id="RHEA:20301"/>
        <dbReference type="Rhea" id="RHEA-COMP:9658"/>
        <dbReference type="Rhea" id="RHEA-COMP:9673"/>
        <dbReference type="ChEBI" id="CHEBI:30616"/>
        <dbReference type="ChEBI" id="CHEBI:32682"/>
        <dbReference type="ChEBI" id="CHEBI:33019"/>
        <dbReference type="ChEBI" id="CHEBI:78442"/>
        <dbReference type="ChEBI" id="CHEBI:78513"/>
        <dbReference type="ChEBI" id="CHEBI:456215"/>
        <dbReference type="EC" id="6.1.1.19"/>
    </reaction>
</comment>
<comment type="subunit">
    <text evidence="1">Monomer.</text>
</comment>
<comment type="subcellular location">
    <subcellularLocation>
        <location evidence="1">Cytoplasm</location>
    </subcellularLocation>
</comment>
<comment type="similarity">
    <text evidence="1">Belongs to the class-I aminoacyl-tRNA synthetase family.</text>
</comment>
<organism>
    <name type="scientific">Vibrio campbellii (strain ATCC BAA-1116)</name>
    <dbReference type="NCBI Taxonomy" id="2902295"/>
    <lineage>
        <taxon>Bacteria</taxon>
        <taxon>Pseudomonadati</taxon>
        <taxon>Pseudomonadota</taxon>
        <taxon>Gammaproteobacteria</taxon>
        <taxon>Vibrionales</taxon>
        <taxon>Vibrionaceae</taxon>
        <taxon>Vibrio</taxon>
    </lineage>
</organism>
<feature type="chain" id="PRO_1000018144" description="Arginine--tRNA ligase">
    <location>
        <begin position="1"/>
        <end position="577"/>
    </location>
</feature>
<feature type="short sequence motif" description="'HIGH' region">
    <location>
        <begin position="122"/>
        <end position="132"/>
    </location>
</feature>
<proteinExistence type="inferred from homology"/>
<reference key="1">
    <citation type="submission" date="2007-08" db="EMBL/GenBank/DDBJ databases">
        <authorList>
            <consortium name="The Vibrio harveyi Genome Sequencing Project"/>
            <person name="Bassler B."/>
            <person name="Clifton S.W."/>
            <person name="Fulton L."/>
            <person name="Delehaunty K."/>
            <person name="Fronick C."/>
            <person name="Harrison M."/>
            <person name="Markivic C."/>
            <person name="Fulton R."/>
            <person name="Tin-Wollam A.-M."/>
            <person name="Shah N."/>
            <person name="Pepin K."/>
            <person name="Nash W."/>
            <person name="Thiruvilangam P."/>
            <person name="Bhonagiri V."/>
            <person name="Waters C."/>
            <person name="Tu K.C."/>
            <person name="Irgon J."/>
            <person name="Wilson R.K."/>
        </authorList>
    </citation>
    <scope>NUCLEOTIDE SEQUENCE [LARGE SCALE GENOMIC DNA]</scope>
    <source>
        <strain>ATCC BAA-1116 / BB120</strain>
    </source>
</reference>
<keyword id="KW-0030">Aminoacyl-tRNA synthetase</keyword>
<keyword id="KW-0067">ATP-binding</keyword>
<keyword id="KW-0963">Cytoplasm</keyword>
<keyword id="KW-0436">Ligase</keyword>
<keyword id="KW-0547">Nucleotide-binding</keyword>
<keyword id="KW-0648">Protein biosynthesis</keyword>
<name>SYR_VIBC1</name>
<sequence length="577" mass="63759">MNIQALINDKVSQALEAAGAPAGSPAAVRQSAKPQFGDYQANGVMGVAKKLGTNPREFAQKVLDVLDLDGIASKTEIAGPGFINIFLSEEFLAKQAEAALADSRLGVAADEAQTIVADYSAPNVAKEMHVGHLRSTIIGDAVVRTLEFLGHKVIRANHIGDWGTQFGMLIANLERVQQESGEVSMELADLEGFYRESKKLYDEDEEFAVKARNYVVKLQSGDEFCAEMWKKLVDVTMIQNQRNYDRLNVSLSRDDVMGESMYNDMLPKIVADLKAQGLAVEDDGAQVVFLEEFKNKDGEAMGVIVQKRDGGFLYTTTDIACAKYRYEELGADRVLYFIDSRQHQHLMQAWTIVRKAGYVPESVSLEHHAFGMMLGKDGKPFKTRAGGTVRLADLLDEAEVRAAQLIESKNPELAEDEKKAIANTVAMAAVKYADLSKHRTTDYVFDWDNMLAFEGNTAPYMQYAYTRVASVFAKAGVSMDDLQGEIKITDEKEKALIAKLMQFEEAVQSVAREGQPHIMCSYLFELAGQFSSFYEACPILVAEDEAVKQSRLKLAALTAKTIKQGLSLLGIDTLERM</sequence>
<dbReference type="EC" id="6.1.1.19" evidence="1"/>
<dbReference type="EMBL" id="CP000789">
    <property type="protein sequence ID" value="ABU70345.1"/>
    <property type="molecule type" value="Genomic_DNA"/>
</dbReference>
<dbReference type="RefSeq" id="WP_005446437.1">
    <property type="nucleotide sequence ID" value="NC_022269.1"/>
</dbReference>
<dbReference type="SMR" id="A7MT26"/>
<dbReference type="GeneID" id="67378042"/>
<dbReference type="KEGG" id="vha:VIBHAR_01368"/>
<dbReference type="PATRIC" id="fig|338187.25.peg.1281"/>
<dbReference type="Proteomes" id="UP000008152">
    <property type="component" value="Chromosome I"/>
</dbReference>
<dbReference type="GO" id="GO:0005737">
    <property type="term" value="C:cytoplasm"/>
    <property type="evidence" value="ECO:0007669"/>
    <property type="project" value="UniProtKB-SubCell"/>
</dbReference>
<dbReference type="GO" id="GO:0004814">
    <property type="term" value="F:arginine-tRNA ligase activity"/>
    <property type="evidence" value="ECO:0007669"/>
    <property type="project" value="UniProtKB-UniRule"/>
</dbReference>
<dbReference type="GO" id="GO:0005524">
    <property type="term" value="F:ATP binding"/>
    <property type="evidence" value="ECO:0007669"/>
    <property type="project" value="UniProtKB-UniRule"/>
</dbReference>
<dbReference type="GO" id="GO:0006420">
    <property type="term" value="P:arginyl-tRNA aminoacylation"/>
    <property type="evidence" value="ECO:0007669"/>
    <property type="project" value="UniProtKB-UniRule"/>
</dbReference>
<dbReference type="CDD" id="cd07956">
    <property type="entry name" value="Anticodon_Ia_Arg"/>
    <property type="match status" value="1"/>
</dbReference>
<dbReference type="CDD" id="cd00671">
    <property type="entry name" value="ArgRS_core"/>
    <property type="match status" value="1"/>
</dbReference>
<dbReference type="FunFam" id="1.10.730.10:FF:000001">
    <property type="entry name" value="Arginine--tRNA ligase"/>
    <property type="match status" value="1"/>
</dbReference>
<dbReference type="FunFam" id="3.40.50.620:FF:000030">
    <property type="entry name" value="Arginine--tRNA ligase"/>
    <property type="match status" value="1"/>
</dbReference>
<dbReference type="Gene3D" id="3.30.1360.70">
    <property type="entry name" value="Arginyl tRNA synthetase N-terminal domain"/>
    <property type="match status" value="1"/>
</dbReference>
<dbReference type="Gene3D" id="3.40.50.620">
    <property type="entry name" value="HUPs"/>
    <property type="match status" value="1"/>
</dbReference>
<dbReference type="Gene3D" id="1.10.730.10">
    <property type="entry name" value="Isoleucyl-tRNA Synthetase, Domain 1"/>
    <property type="match status" value="1"/>
</dbReference>
<dbReference type="HAMAP" id="MF_00123">
    <property type="entry name" value="Arg_tRNA_synth"/>
    <property type="match status" value="1"/>
</dbReference>
<dbReference type="InterPro" id="IPR001412">
    <property type="entry name" value="aa-tRNA-synth_I_CS"/>
</dbReference>
<dbReference type="InterPro" id="IPR001278">
    <property type="entry name" value="Arg-tRNA-ligase"/>
</dbReference>
<dbReference type="InterPro" id="IPR005148">
    <property type="entry name" value="Arg-tRNA-synth_N"/>
</dbReference>
<dbReference type="InterPro" id="IPR036695">
    <property type="entry name" value="Arg-tRNA-synth_N_sf"/>
</dbReference>
<dbReference type="InterPro" id="IPR035684">
    <property type="entry name" value="ArgRS_core"/>
</dbReference>
<dbReference type="InterPro" id="IPR008909">
    <property type="entry name" value="DALR_anticod-bd"/>
</dbReference>
<dbReference type="InterPro" id="IPR014729">
    <property type="entry name" value="Rossmann-like_a/b/a_fold"/>
</dbReference>
<dbReference type="InterPro" id="IPR009080">
    <property type="entry name" value="tRNAsynth_Ia_anticodon-bd"/>
</dbReference>
<dbReference type="NCBIfam" id="TIGR00456">
    <property type="entry name" value="argS"/>
    <property type="match status" value="1"/>
</dbReference>
<dbReference type="PANTHER" id="PTHR11956:SF5">
    <property type="entry name" value="ARGININE--TRNA LIGASE, CYTOPLASMIC"/>
    <property type="match status" value="1"/>
</dbReference>
<dbReference type="PANTHER" id="PTHR11956">
    <property type="entry name" value="ARGINYL-TRNA SYNTHETASE"/>
    <property type="match status" value="1"/>
</dbReference>
<dbReference type="Pfam" id="PF03485">
    <property type="entry name" value="Arg_tRNA_synt_N"/>
    <property type="match status" value="1"/>
</dbReference>
<dbReference type="Pfam" id="PF05746">
    <property type="entry name" value="DALR_1"/>
    <property type="match status" value="1"/>
</dbReference>
<dbReference type="Pfam" id="PF00750">
    <property type="entry name" value="tRNA-synt_1d"/>
    <property type="match status" value="1"/>
</dbReference>
<dbReference type="PRINTS" id="PR01038">
    <property type="entry name" value="TRNASYNTHARG"/>
</dbReference>
<dbReference type="SMART" id="SM01016">
    <property type="entry name" value="Arg_tRNA_synt_N"/>
    <property type="match status" value="1"/>
</dbReference>
<dbReference type="SMART" id="SM00836">
    <property type="entry name" value="DALR_1"/>
    <property type="match status" value="1"/>
</dbReference>
<dbReference type="SUPFAM" id="SSF47323">
    <property type="entry name" value="Anticodon-binding domain of a subclass of class I aminoacyl-tRNA synthetases"/>
    <property type="match status" value="1"/>
</dbReference>
<dbReference type="SUPFAM" id="SSF55190">
    <property type="entry name" value="Arginyl-tRNA synthetase (ArgRS), N-terminal 'additional' domain"/>
    <property type="match status" value="1"/>
</dbReference>
<dbReference type="SUPFAM" id="SSF52374">
    <property type="entry name" value="Nucleotidylyl transferase"/>
    <property type="match status" value="1"/>
</dbReference>
<dbReference type="PROSITE" id="PS00178">
    <property type="entry name" value="AA_TRNA_LIGASE_I"/>
    <property type="match status" value="1"/>
</dbReference>
<accession>A7MT26</accession>